<name>ATPG_GEOKA</name>
<feature type="chain" id="PRO_0000073287" description="ATP synthase gamma chain">
    <location>
        <begin position="1"/>
        <end position="285"/>
    </location>
</feature>
<organism>
    <name type="scientific">Geobacillus kaustophilus (strain HTA426)</name>
    <dbReference type="NCBI Taxonomy" id="235909"/>
    <lineage>
        <taxon>Bacteria</taxon>
        <taxon>Bacillati</taxon>
        <taxon>Bacillota</taxon>
        <taxon>Bacilli</taxon>
        <taxon>Bacillales</taxon>
        <taxon>Anoxybacillaceae</taxon>
        <taxon>Geobacillus</taxon>
        <taxon>Geobacillus thermoleovorans group</taxon>
    </lineage>
</organism>
<sequence length="285" mass="31821">MASLRDIKTRINATKKTSQITKAMEMVSTSKLNRAEQNAKSFVPYMEKIQEVVANVALGAGGASHPMLVSRPVKKTGYLVITSDRGLAGAYNSNVLRLVYQTIQKRHASPDEYAIIVIGRVGLSFFRKRNMPVILDITRLPDQPSFADIKEIARKTVGLFADGTFDELYMYYNHYVSAIQQEVTERKLLPLTDLAENKQRTVYEFEPSQEEILDVLLPQYAESLIYGALLDAKASEHAARMTAMKNATDNANELIRTLTLSYNRARQAAITQEITEIVAGANALQ</sequence>
<evidence type="ECO:0000255" key="1">
    <source>
        <dbReference type="HAMAP-Rule" id="MF_00815"/>
    </source>
</evidence>
<reference key="1">
    <citation type="journal article" date="2004" name="Nucleic Acids Res.">
        <title>Thermoadaptation trait revealed by the genome sequence of thermophilic Geobacillus kaustophilus.</title>
        <authorList>
            <person name="Takami H."/>
            <person name="Takaki Y."/>
            <person name="Chee G.-J."/>
            <person name="Nishi S."/>
            <person name="Shimamura S."/>
            <person name="Suzuki H."/>
            <person name="Matsui S."/>
            <person name="Uchiyama I."/>
        </authorList>
    </citation>
    <scope>NUCLEOTIDE SEQUENCE [LARGE SCALE GENOMIC DNA]</scope>
    <source>
        <strain>HTA426</strain>
    </source>
</reference>
<proteinExistence type="evidence at protein level"/>
<protein>
    <recommendedName>
        <fullName evidence="1">ATP synthase gamma chain</fullName>
    </recommendedName>
    <alternativeName>
        <fullName evidence="1">ATP synthase F1 sector gamma subunit</fullName>
    </alternativeName>
    <alternativeName>
        <fullName evidence="1">F-ATPase gamma subunit</fullName>
    </alternativeName>
</protein>
<accession>Q5KUJ2</accession>
<gene>
    <name evidence="1" type="primary">atpG</name>
    <name type="ordered locus">GK3359</name>
</gene>
<comment type="function">
    <text evidence="1">Produces ATP from ADP in the presence of a proton gradient across the membrane. The gamma chain is believed to be important in regulating ATPase activity and the flow of protons through the CF(0) complex.</text>
</comment>
<comment type="subunit">
    <text evidence="1">F-type ATPases have 2 components, CF(1) - the catalytic core - and CF(0) - the membrane proton channel. CF(1) has five subunits: alpha(3), beta(3), gamma(1), delta(1), epsilon(1). CF(0) has three main subunits: a, b and c.</text>
</comment>
<comment type="subcellular location">
    <subcellularLocation>
        <location evidence="1">Cell membrane</location>
        <topology evidence="1">Peripheral membrane protein</topology>
    </subcellularLocation>
</comment>
<comment type="similarity">
    <text evidence="1">Belongs to the ATPase gamma chain family.</text>
</comment>
<dbReference type="EMBL" id="BA000043">
    <property type="protein sequence ID" value="BAD77644.1"/>
    <property type="molecule type" value="Genomic_DNA"/>
</dbReference>
<dbReference type="RefSeq" id="WP_011232826.1">
    <property type="nucleotide sequence ID" value="NC_006510.1"/>
</dbReference>
<dbReference type="PDB" id="4XD7">
    <property type="method" value="X-ray"/>
    <property type="resolution" value="3.90 A"/>
    <property type="chains" value="G=1-285"/>
</dbReference>
<dbReference type="PDBsum" id="4XD7"/>
<dbReference type="SMR" id="Q5KUJ2"/>
<dbReference type="STRING" id="235909.GK3359"/>
<dbReference type="GeneID" id="32065243"/>
<dbReference type="KEGG" id="gka:GK3359"/>
<dbReference type="eggNOG" id="COG0224">
    <property type="taxonomic scope" value="Bacteria"/>
</dbReference>
<dbReference type="HOGENOM" id="CLU_050669_0_1_9"/>
<dbReference type="Proteomes" id="UP000001172">
    <property type="component" value="Chromosome"/>
</dbReference>
<dbReference type="GO" id="GO:0005886">
    <property type="term" value="C:plasma membrane"/>
    <property type="evidence" value="ECO:0007669"/>
    <property type="project" value="UniProtKB-SubCell"/>
</dbReference>
<dbReference type="GO" id="GO:0045259">
    <property type="term" value="C:proton-transporting ATP synthase complex"/>
    <property type="evidence" value="ECO:0007669"/>
    <property type="project" value="UniProtKB-KW"/>
</dbReference>
<dbReference type="GO" id="GO:0005524">
    <property type="term" value="F:ATP binding"/>
    <property type="evidence" value="ECO:0007669"/>
    <property type="project" value="UniProtKB-UniRule"/>
</dbReference>
<dbReference type="GO" id="GO:0046933">
    <property type="term" value="F:proton-transporting ATP synthase activity, rotational mechanism"/>
    <property type="evidence" value="ECO:0007669"/>
    <property type="project" value="UniProtKB-UniRule"/>
</dbReference>
<dbReference type="GO" id="GO:0042777">
    <property type="term" value="P:proton motive force-driven plasma membrane ATP synthesis"/>
    <property type="evidence" value="ECO:0007669"/>
    <property type="project" value="UniProtKB-UniRule"/>
</dbReference>
<dbReference type="CDD" id="cd12151">
    <property type="entry name" value="F1-ATPase_gamma"/>
    <property type="match status" value="1"/>
</dbReference>
<dbReference type="FunFam" id="1.10.287.80:FF:000010">
    <property type="entry name" value="ATP synthase gamma chain"/>
    <property type="match status" value="1"/>
</dbReference>
<dbReference type="FunFam" id="3.40.1380.10:FF:000002">
    <property type="entry name" value="ATP synthase gamma chain"/>
    <property type="match status" value="1"/>
</dbReference>
<dbReference type="Gene3D" id="3.40.1380.10">
    <property type="match status" value="1"/>
</dbReference>
<dbReference type="Gene3D" id="1.10.287.80">
    <property type="entry name" value="ATP synthase, gamma subunit, helix hairpin domain"/>
    <property type="match status" value="1"/>
</dbReference>
<dbReference type="HAMAP" id="MF_00815">
    <property type="entry name" value="ATP_synth_gamma_bact"/>
    <property type="match status" value="1"/>
</dbReference>
<dbReference type="InterPro" id="IPR035968">
    <property type="entry name" value="ATP_synth_F1_ATPase_gsu"/>
</dbReference>
<dbReference type="InterPro" id="IPR000131">
    <property type="entry name" value="ATP_synth_F1_gsu"/>
</dbReference>
<dbReference type="InterPro" id="IPR023632">
    <property type="entry name" value="ATP_synth_F1_gsu_CS"/>
</dbReference>
<dbReference type="NCBIfam" id="TIGR01146">
    <property type="entry name" value="ATPsyn_F1gamma"/>
    <property type="match status" value="1"/>
</dbReference>
<dbReference type="PANTHER" id="PTHR11693">
    <property type="entry name" value="ATP SYNTHASE GAMMA CHAIN"/>
    <property type="match status" value="1"/>
</dbReference>
<dbReference type="PANTHER" id="PTHR11693:SF22">
    <property type="entry name" value="ATP SYNTHASE SUBUNIT GAMMA, MITOCHONDRIAL"/>
    <property type="match status" value="1"/>
</dbReference>
<dbReference type="Pfam" id="PF00231">
    <property type="entry name" value="ATP-synt"/>
    <property type="match status" value="1"/>
</dbReference>
<dbReference type="PRINTS" id="PR00126">
    <property type="entry name" value="ATPASEGAMMA"/>
</dbReference>
<dbReference type="SUPFAM" id="SSF52943">
    <property type="entry name" value="ATP synthase (F1-ATPase), gamma subunit"/>
    <property type="match status" value="1"/>
</dbReference>
<dbReference type="PROSITE" id="PS00153">
    <property type="entry name" value="ATPASE_GAMMA"/>
    <property type="match status" value="1"/>
</dbReference>
<keyword id="KW-0002">3D-structure</keyword>
<keyword id="KW-0066">ATP synthesis</keyword>
<keyword id="KW-1003">Cell membrane</keyword>
<keyword id="KW-0139">CF(1)</keyword>
<keyword id="KW-0375">Hydrogen ion transport</keyword>
<keyword id="KW-0406">Ion transport</keyword>
<keyword id="KW-0472">Membrane</keyword>
<keyword id="KW-1185">Reference proteome</keyword>
<keyword id="KW-0813">Transport</keyword>